<sequence>MSASLDDASVAPLVRKTAAWAWRFLVILAAMVALLWVLNKFEVIVVPVLLALMLSALLVPPVDWLDSRGLPHAVAVTLVLLSGFAVLGGILTFVVSQFIAGLPHLVTEVERSIDSARRWLIEGPAHLRGEQIDNAGNAAIEALRNNQAKLTSGALSTAATITELVTAAVLVLFTLIFFLYGGRSIWQYVTKAFPASVRDRVRAAGRAGYASLIGYARATFLVALTDAAGVGAGLAVMGVPLALPLASLVFFGAFIPLIGAVVAGFLAVVVALLAKGIGYALITVGLLIAVNQLEAHLLQPLVMGRAVSIHPLAVVLAIAAGGVLAGVVGALLAVPTVAFFNNAVQVLLGGNPFADVADVSSDHLTEV</sequence>
<organism>
    <name type="scientific">Mycobacterium tuberculosis (strain CDC 1551 / Oshkosh)</name>
    <dbReference type="NCBI Taxonomy" id="83331"/>
    <lineage>
        <taxon>Bacteria</taxon>
        <taxon>Bacillati</taxon>
        <taxon>Actinomycetota</taxon>
        <taxon>Actinomycetes</taxon>
        <taxon>Mycobacteriales</taxon>
        <taxon>Mycobacteriaceae</taxon>
        <taxon>Mycobacterium</taxon>
        <taxon>Mycobacterium tuberculosis complex</taxon>
    </lineage>
</organism>
<feature type="chain" id="PRO_0000428513" description="Putative transport protein MT0215">
    <location>
        <begin position="1"/>
        <end position="367"/>
    </location>
</feature>
<feature type="transmembrane region" description="Helical" evidence="1">
    <location>
        <begin position="18"/>
        <end position="38"/>
    </location>
</feature>
<feature type="transmembrane region" description="Helical" evidence="1">
    <location>
        <begin position="41"/>
        <end position="61"/>
    </location>
</feature>
<feature type="transmembrane region" description="Helical" evidence="1">
    <location>
        <begin position="74"/>
        <end position="94"/>
    </location>
</feature>
<feature type="transmembrane region" description="Helical" evidence="1">
    <location>
        <begin position="161"/>
        <end position="181"/>
    </location>
</feature>
<feature type="transmembrane region" description="Helical" evidence="1">
    <location>
        <begin position="228"/>
        <end position="248"/>
    </location>
</feature>
<feature type="transmembrane region" description="Helical" evidence="1">
    <location>
        <begin position="249"/>
        <end position="269"/>
    </location>
</feature>
<feature type="transmembrane region" description="Helical" evidence="1">
    <location>
        <begin position="270"/>
        <end position="290"/>
    </location>
</feature>
<feature type="transmembrane region" description="Helical" evidence="1">
    <location>
        <begin position="314"/>
        <end position="334"/>
    </location>
</feature>
<feature type="transmembrane region" description="Helical" evidence="1">
    <location>
        <begin position="337"/>
        <end position="357"/>
    </location>
</feature>
<comment type="subcellular location">
    <subcellularLocation>
        <location evidence="2">Cell membrane</location>
        <topology evidence="2">Multi-pass membrane protein</topology>
    </subcellularLocation>
</comment>
<comment type="similarity">
    <text evidence="2">Belongs to the autoinducer-2 exporter (AI-2E) (TC 2.A.86) family.</text>
</comment>
<protein>
    <recommendedName>
        <fullName>Putative transport protein MT0215</fullName>
    </recommendedName>
</protein>
<dbReference type="EMBL" id="AE000516">
    <property type="protein sequence ID" value="AAK44436.1"/>
    <property type="molecule type" value="Genomic_DNA"/>
</dbReference>
<dbReference type="PIR" id="B70839">
    <property type="entry name" value="B70839"/>
</dbReference>
<dbReference type="RefSeq" id="WP_003899854.1">
    <property type="nucleotide sequence ID" value="NZ_KK341227.1"/>
</dbReference>
<dbReference type="SMR" id="P9WFM4"/>
<dbReference type="KEGG" id="mtc:MT0215"/>
<dbReference type="PATRIC" id="fig|83331.31.peg.234"/>
<dbReference type="HOGENOM" id="CLU_031275_3_2_11"/>
<dbReference type="Proteomes" id="UP000001020">
    <property type="component" value="Chromosome"/>
</dbReference>
<dbReference type="GO" id="GO:0005886">
    <property type="term" value="C:plasma membrane"/>
    <property type="evidence" value="ECO:0007669"/>
    <property type="project" value="UniProtKB-SubCell"/>
</dbReference>
<dbReference type="GO" id="GO:0055085">
    <property type="term" value="P:transmembrane transport"/>
    <property type="evidence" value="ECO:0007669"/>
    <property type="project" value="TreeGrafter"/>
</dbReference>
<dbReference type="InterPro" id="IPR002549">
    <property type="entry name" value="AI-2E-like"/>
</dbReference>
<dbReference type="PANTHER" id="PTHR21716:SF53">
    <property type="entry name" value="PERMEASE PERM-RELATED"/>
    <property type="match status" value="1"/>
</dbReference>
<dbReference type="PANTHER" id="PTHR21716">
    <property type="entry name" value="TRANSMEMBRANE PROTEIN"/>
    <property type="match status" value="1"/>
</dbReference>
<dbReference type="Pfam" id="PF01594">
    <property type="entry name" value="AI-2E_transport"/>
    <property type="match status" value="1"/>
</dbReference>
<reference key="1">
    <citation type="journal article" date="2002" name="J. Bacteriol.">
        <title>Whole-genome comparison of Mycobacterium tuberculosis clinical and laboratory strains.</title>
        <authorList>
            <person name="Fleischmann R.D."/>
            <person name="Alland D."/>
            <person name="Eisen J.A."/>
            <person name="Carpenter L."/>
            <person name="White O."/>
            <person name="Peterson J.D."/>
            <person name="DeBoy R.T."/>
            <person name="Dodson R.J."/>
            <person name="Gwinn M.L."/>
            <person name="Haft D.H."/>
            <person name="Hickey E.K."/>
            <person name="Kolonay J.F."/>
            <person name="Nelson W.C."/>
            <person name="Umayam L.A."/>
            <person name="Ermolaeva M.D."/>
            <person name="Salzberg S.L."/>
            <person name="Delcher A."/>
            <person name="Utterback T.R."/>
            <person name="Weidman J.F."/>
            <person name="Khouri H.M."/>
            <person name="Gill J."/>
            <person name="Mikula A."/>
            <person name="Bishai W."/>
            <person name="Jacobs W.R. Jr."/>
            <person name="Venter J.C."/>
            <person name="Fraser C.M."/>
        </authorList>
    </citation>
    <scope>NUCLEOTIDE SEQUENCE [LARGE SCALE GENOMIC DNA]</scope>
    <source>
        <strain>CDC 1551 / Oshkosh</strain>
    </source>
</reference>
<gene>
    <name type="ordered locus">MT0215</name>
</gene>
<name>Y205_MYCTO</name>
<evidence type="ECO:0000255" key="1"/>
<evidence type="ECO:0000305" key="2"/>
<proteinExistence type="inferred from homology"/>
<keyword id="KW-1003">Cell membrane</keyword>
<keyword id="KW-0472">Membrane</keyword>
<keyword id="KW-1185">Reference proteome</keyword>
<keyword id="KW-0812">Transmembrane</keyword>
<keyword id="KW-1133">Transmembrane helix</keyword>
<keyword id="KW-0813">Transport</keyword>
<accession>P9WFM4</accession>
<accession>L0T4P1</accession>
<accession>O53656</accession>